<feature type="chain" id="PRO_1000132281" description="High frequency lysogenization protein HflD homolog">
    <location>
        <begin position="1"/>
        <end position="207"/>
    </location>
</feature>
<name>HFLD_CELJU</name>
<reference key="1">
    <citation type="journal article" date="2008" name="J. Bacteriol.">
        <title>Insights into plant cell wall degradation from the genome sequence of the soil bacterium Cellvibrio japonicus.</title>
        <authorList>
            <person name="DeBoy R.T."/>
            <person name="Mongodin E.F."/>
            <person name="Fouts D.E."/>
            <person name="Tailford L.E."/>
            <person name="Khouri H."/>
            <person name="Emerson J.B."/>
            <person name="Mohamoud Y."/>
            <person name="Watkins K."/>
            <person name="Henrissat B."/>
            <person name="Gilbert H.J."/>
            <person name="Nelson K.E."/>
        </authorList>
    </citation>
    <scope>NUCLEOTIDE SEQUENCE [LARGE SCALE GENOMIC DNA]</scope>
    <source>
        <strain>Ueda107</strain>
    </source>
</reference>
<evidence type="ECO:0000255" key="1">
    <source>
        <dbReference type="HAMAP-Rule" id="MF_00695"/>
    </source>
</evidence>
<keyword id="KW-0997">Cell inner membrane</keyword>
<keyword id="KW-1003">Cell membrane</keyword>
<keyword id="KW-0963">Cytoplasm</keyword>
<keyword id="KW-0472">Membrane</keyword>
<keyword id="KW-1185">Reference proteome</keyword>
<protein>
    <recommendedName>
        <fullName evidence="1">High frequency lysogenization protein HflD homolog</fullName>
    </recommendedName>
</protein>
<sequence length="207" mass="23475">MSKNWQDITLALAGIFQATHLVDQVARTGHLPPDAFKCSIESLLDLNPPDTLAVYGGDAANLRTGLEIMRELLRPSSSKYRETLRYGLGVLHLQKKLAGRRDMLGVIGSRIDQAAQQAETFGSTHDNVIANLGGLYSETISTFRYRIQVNGEYQYLQQTRIANQIRALLLAAIRSAMLWRQVGGNRWQLLFYRKQISWQVEDLLRRM</sequence>
<gene>
    <name evidence="1" type="primary">hflD</name>
    <name type="ordered locus">CJA_2491</name>
</gene>
<comment type="subcellular location">
    <subcellularLocation>
        <location>Cytoplasm</location>
    </subcellularLocation>
    <subcellularLocation>
        <location evidence="1">Cell inner membrane</location>
        <topology evidence="1">Peripheral membrane protein</topology>
        <orientation evidence="1">Cytoplasmic side</orientation>
    </subcellularLocation>
</comment>
<comment type="similarity">
    <text evidence="1">Belongs to the HflD family.</text>
</comment>
<accession>B3PKX8</accession>
<proteinExistence type="inferred from homology"/>
<organism>
    <name type="scientific">Cellvibrio japonicus (strain Ueda107)</name>
    <name type="common">Pseudomonas fluorescens subsp. cellulosa</name>
    <dbReference type="NCBI Taxonomy" id="498211"/>
    <lineage>
        <taxon>Bacteria</taxon>
        <taxon>Pseudomonadati</taxon>
        <taxon>Pseudomonadota</taxon>
        <taxon>Gammaproteobacteria</taxon>
        <taxon>Cellvibrionales</taxon>
        <taxon>Cellvibrionaceae</taxon>
        <taxon>Cellvibrio</taxon>
    </lineage>
</organism>
<dbReference type="EMBL" id="CP000934">
    <property type="protein sequence ID" value="ACE82786.1"/>
    <property type="molecule type" value="Genomic_DNA"/>
</dbReference>
<dbReference type="RefSeq" id="WP_012488088.1">
    <property type="nucleotide sequence ID" value="NC_010995.1"/>
</dbReference>
<dbReference type="SMR" id="B3PKX8"/>
<dbReference type="STRING" id="498211.CJA_2491"/>
<dbReference type="KEGG" id="cja:CJA_2491"/>
<dbReference type="eggNOG" id="COG2915">
    <property type="taxonomic scope" value="Bacteria"/>
</dbReference>
<dbReference type="HOGENOM" id="CLU_098920_0_0_6"/>
<dbReference type="OrthoDB" id="9788031at2"/>
<dbReference type="Proteomes" id="UP000001036">
    <property type="component" value="Chromosome"/>
</dbReference>
<dbReference type="GO" id="GO:0005737">
    <property type="term" value="C:cytoplasm"/>
    <property type="evidence" value="ECO:0007669"/>
    <property type="project" value="UniProtKB-SubCell"/>
</dbReference>
<dbReference type="GO" id="GO:0005886">
    <property type="term" value="C:plasma membrane"/>
    <property type="evidence" value="ECO:0007669"/>
    <property type="project" value="UniProtKB-SubCell"/>
</dbReference>
<dbReference type="Gene3D" id="1.10.3890.10">
    <property type="entry name" value="HflD-like"/>
    <property type="match status" value="1"/>
</dbReference>
<dbReference type="HAMAP" id="MF_00695">
    <property type="entry name" value="HflD_protein"/>
    <property type="match status" value="1"/>
</dbReference>
<dbReference type="InterPro" id="IPR007451">
    <property type="entry name" value="HflD"/>
</dbReference>
<dbReference type="InterPro" id="IPR035932">
    <property type="entry name" value="HflD-like_sf"/>
</dbReference>
<dbReference type="NCBIfam" id="NF001246">
    <property type="entry name" value="PRK00218.1-2"/>
    <property type="match status" value="1"/>
</dbReference>
<dbReference type="PANTHER" id="PTHR38100">
    <property type="entry name" value="HIGH FREQUENCY LYSOGENIZATION PROTEIN HFLD"/>
    <property type="match status" value="1"/>
</dbReference>
<dbReference type="PANTHER" id="PTHR38100:SF1">
    <property type="entry name" value="HIGH FREQUENCY LYSOGENIZATION PROTEIN HFLD"/>
    <property type="match status" value="1"/>
</dbReference>
<dbReference type="Pfam" id="PF04356">
    <property type="entry name" value="DUF489"/>
    <property type="match status" value="1"/>
</dbReference>
<dbReference type="SUPFAM" id="SSF101322">
    <property type="entry name" value="YcfC-like"/>
    <property type="match status" value="1"/>
</dbReference>